<dbReference type="EMBL" id="AB120662">
    <property type="protein sequence ID" value="BAD15277.1"/>
    <property type="molecule type" value="mRNA"/>
</dbReference>
<dbReference type="EMBL" id="DP000009">
    <property type="protein sequence ID" value="ABF97778.1"/>
    <property type="molecule type" value="Genomic_DNA"/>
</dbReference>
<dbReference type="EMBL" id="AP008209">
    <property type="protein sequence ID" value="BAF12634.1"/>
    <property type="molecule type" value="Genomic_DNA"/>
</dbReference>
<dbReference type="EMBL" id="AP014959">
    <property type="protein sequence ID" value="BAS85389.1"/>
    <property type="molecule type" value="Genomic_DNA"/>
</dbReference>
<dbReference type="EMBL" id="CM000140">
    <property type="protein sequence ID" value="EEE59552.1"/>
    <property type="molecule type" value="Genomic_DNA"/>
</dbReference>
<dbReference type="EMBL" id="AK241226">
    <property type="protein sequence ID" value="BAH00984.1"/>
    <property type="molecule type" value="mRNA"/>
</dbReference>
<dbReference type="RefSeq" id="XP_015628756.1">
    <property type="nucleotide sequence ID" value="XM_015773270.1"/>
</dbReference>
<dbReference type="SMR" id="Q75WU1"/>
<dbReference type="FunCoup" id="Q75WU1">
    <property type="interactions" value="881"/>
</dbReference>
<dbReference type="IntAct" id="Q75WU1">
    <property type="interactions" value="1"/>
</dbReference>
<dbReference type="STRING" id="39947.Q75WU1"/>
<dbReference type="PaxDb" id="39947-Q75WU1"/>
<dbReference type="EnsemblPlants" id="Os03t0635100-01">
    <property type="protein sequence ID" value="Os03t0635100-01"/>
    <property type="gene ID" value="Os03g0635100"/>
</dbReference>
<dbReference type="Gramene" id="Os03t0635100-01">
    <property type="protein sequence ID" value="Os03t0635100-01"/>
    <property type="gene ID" value="Os03g0635100"/>
</dbReference>
<dbReference type="KEGG" id="dosa:Os03g0635100"/>
<dbReference type="eggNOG" id="ENOG502S439">
    <property type="taxonomic scope" value="Eukaryota"/>
</dbReference>
<dbReference type="HOGENOM" id="CLU_105699_2_0_1"/>
<dbReference type="InParanoid" id="Q75WU1"/>
<dbReference type="OMA" id="DRWFERP"/>
<dbReference type="OrthoDB" id="1934467at2759"/>
<dbReference type="Proteomes" id="UP000000763">
    <property type="component" value="Chromosome 3"/>
</dbReference>
<dbReference type="Proteomes" id="UP000007752">
    <property type="component" value="Chromosome 3"/>
</dbReference>
<dbReference type="Proteomes" id="UP000059680">
    <property type="component" value="Chromosome 3"/>
</dbReference>
<dbReference type="GO" id="GO:0005886">
    <property type="term" value="C:plasma membrane"/>
    <property type="evidence" value="ECO:0000314"/>
    <property type="project" value="UniProtKB"/>
</dbReference>
<dbReference type="GO" id="GO:0098552">
    <property type="term" value="C:side of membrane"/>
    <property type="evidence" value="ECO:0007669"/>
    <property type="project" value="UniProtKB-KW"/>
</dbReference>
<dbReference type="GO" id="GO:0007186">
    <property type="term" value="P:G protein-coupled receptor signaling pathway"/>
    <property type="evidence" value="ECO:0007669"/>
    <property type="project" value="InterPro"/>
</dbReference>
<dbReference type="InterPro" id="IPR015898">
    <property type="entry name" value="G-protein_gamma-like_dom"/>
</dbReference>
<dbReference type="InterPro" id="IPR045878">
    <property type="entry name" value="GG1/2"/>
</dbReference>
<dbReference type="PANTHER" id="PTHR35129">
    <property type="entry name" value="GUANINE NUCLEOTIDE-BINDING PROTEIN SUBUNIT GAMMA 1"/>
    <property type="match status" value="1"/>
</dbReference>
<dbReference type="PANTHER" id="PTHR35129:SF1">
    <property type="entry name" value="GUANINE NUCLEOTIDE-BINDING PROTEIN SUBUNIT GAMMA 1"/>
    <property type="match status" value="1"/>
</dbReference>
<dbReference type="Pfam" id="PF00631">
    <property type="entry name" value="G-gamma"/>
    <property type="match status" value="1"/>
</dbReference>
<dbReference type="SMART" id="SM01224">
    <property type="entry name" value="G_gamma"/>
    <property type="match status" value="1"/>
</dbReference>
<proteinExistence type="evidence at protein level"/>
<feature type="chain" id="PRO_0000432811" description="Guanine nucleotide-binding protein subunit gamma 1">
    <location>
        <begin position="1"/>
        <end position="90"/>
    </location>
</feature>
<feature type="propeptide" id="PRO_0000433234" description="Removed in mature form" evidence="1">
    <location>
        <begin position="91"/>
        <end position="93"/>
    </location>
</feature>
<feature type="domain" description="G protein gamma" evidence="3">
    <location>
        <begin position="20"/>
        <end position="93"/>
    </location>
</feature>
<feature type="coiled-coil region" evidence="2">
    <location>
        <begin position="12"/>
        <end position="52"/>
    </location>
</feature>
<feature type="modified residue" description="Cysteine methyl ester" evidence="1">
    <location>
        <position position="90"/>
    </location>
</feature>
<feature type="lipid moiety-binding region" description="S-palmitoyl cysteine" evidence="1">
    <location>
        <position position="88"/>
    </location>
</feature>
<feature type="lipid moiety-binding region" description="S-farnesyl cysteine" evidence="1">
    <location>
        <position position="90"/>
    </location>
</feature>
<name>GG1_ORYSJ</name>
<keyword id="KW-1003">Cell membrane</keyword>
<keyword id="KW-0175">Coiled coil</keyword>
<keyword id="KW-0325">Glycoprotein</keyword>
<keyword id="KW-0336">GPI-anchor</keyword>
<keyword id="KW-0449">Lipoprotein</keyword>
<keyword id="KW-0472">Membrane</keyword>
<keyword id="KW-0488">Methylation</keyword>
<keyword id="KW-0564">Palmitate</keyword>
<keyword id="KW-0636">Prenylation</keyword>
<keyword id="KW-1185">Reference proteome</keyword>
<keyword id="KW-0807">Transducer</keyword>
<accession>Q75WU1</accession>
<accession>A0A0P0W178</accession>
<evidence type="ECO:0000250" key="1">
    <source>
        <dbReference type="UniProtKB" id="Q9FDX9"/>
    </source>
</evidence>
<evidence type="ECO:0000255" key="2"/>
<evidence type="ECO:0000255" key="3">
    <source>
        <dbReference type="PROSITE-ProRule" id="PRU00592"/>
    </source>
</evidence>
<evidence type="ECO:0000269" key="4">
    <source>
    </source>
</evidence>
<evidence type="ECO:0000303" key="5">
    <source>
    </source>
</evidence>
<evidence type="ECO:0000305" key="6"/>
<evidence type="ECO:0000312" key="7">
    <source>
        <dbReference type="EMBL" id="ABF97778.1"/>
    </source>
</evidence>
<evidence type="ECO:0000312" key="8">
    <source>
        <dbReference type="EMBL" id="BAF12634.1"/>
    </source>
</evidence>
<evidence type="ECO:0000312" key="9">
    <source>
        <dbReference type="EMBL" id="EEE59552.1"/>
    </source>
</evidence>
<organism>
    <name type="scientific">Oryza sativa subsp. japonica</name>
    <name type="common">Rice</name>
    <dbReference type="NCBI Taxonomy" id="39947"/>
    <lineage>
        <taxon>Eukaryota</taxon>
        <taxon>Viridiplantae</taxon>
        <taxon>Streptophyta</taxon>
        <taxon>Embryophyta</taxon>
        <taxon>Tracheophyta</taxon>
        <taxon>Spermatophyta</taxon>
        <taxon>Magnoliopsida</taxon>
        <taxon>Liliopsida</taxon>
        <taxon>Poales</taxon>
        <taxon>Poaceae</taxon>
        <taxon>BOP clade</taxon>
        <taxon>Oryzoideae</taxon>
        <taxon>Oryzeae</taxon>
        <taxon>Oryzinae</taxon>
        <taxon>Oryza</taxon>
        <taxon>Oryza sativa</taxon>
    </lineage>
</organism>
<protein>
    <recommendedName>
        <fullName evidence="6">Guanine nucleotide-binding protein subunit gamma 1</fullName>
    </recommendedName>
    <alternativeName>
        <fullName evidence="6">Ggamma-subunit 1</fullName>
    </alternativeName>
    <alternativeName>
        <fullName evidence="6">Heterotrimeric G protein gamma-subunit 1</fullName>
    </alternativeName>
</protein>
<gene>
    <name evidence="5" type="primary">RGG1</name>
    <name evidence="8" type="ordered locus">Os03g0635100</name>
    <name evidence="7" type="ordered locus">LOC_Os03g43480</name>
    <name evidence="9" type="ORF">OsJ_11830</name>
</gene>
<comment type="function">
    <text evidence="6">Guanine nucleotide-binding proteins (G proteins) are involved as modulators or transducers in various transmembrane signaling systems.</text>
</comment>
<comment type="subunit">
    <text evidence="4">G proteins are composed of 3 units, alpha, beta and gamma. Interacts with the beta subunit RGB1.</text>
</comment>
<comment type="interaction">
    <interactant intactId="EBI-1100093">
        <id>Q75WU1</id>
    </interactant>
    <interactant intactId="EBI-1100119">
        <id>Q40687</id>
        <label>RGB1</label>
    </interactant>
    <organismsDiffer>false</organismsDiffer>
    <experiments>4</experiments>
</comment>
<comment type="subcellular location">
    <subcellularLocation>
        <location evidence="4">Cell membrane</location>
        <topology evidence="6">Lipid-anchor</topology>
        <topology evidence="6">GPI-anchor</topology>
    </subcellularLocation>
</comment>
<reference key="1">
    <citation type="journal article" date="2004" name="Plant J.">
        <title>Characterization of heterotrimeric G protein complexes in rice plasma membrane.</title>
        <authorList>
            <person name="Kato C."/>
            <person name="Mizutani T."/>
            <person name="Tamaki H."/>
            <person name="Kumagai H."/>
            <person name="Kamiya T."/>
            <person name="Hirobe A."/>
            <person name="Fujisawa Y."/>
            <person name="Kato H."/>
            <person name="Iwasaki Y."/>
        </authorList>
    </citation>
    <scope>NUCLEOTIDE SEQUENCE [MRNA]</scope>
    <scope>SUBUNIT</scope>
    <scope>INTERACTION WITH RGB1</scope>
    <scope>SUBCELLULAR LOCATION</scope>
</reference>
<reference key="2">
    <citation type="journal article" date="2005" name="Genome Res.">
        <title>Sequence, annotation, and analysis of synteny between rice chromosome 3 and diverged grass species.</title>
        <authorList>
            <consortium name="The rice chromosome 3 sequencing consortium"/>
            <person name="Buell C.R."/>
            <person name="Yuan Q."/>
            <person name="Ouyang S."/>
            <person name="Liu J."/>
            <person name="Zhu W."/>
            <person name="Wang A."/>
            <person name="Maiti R."/>
            <person name="Haas B."/>
            <person name="Wortman J."/>
            <person name="Pertea M."/>
            <person name="Jones K.M."/>
            <person name="Kim M."/>
            <person name="Overton L."/>
            <person name="Tsitrin T."/>
            <person name="Fadrosh D."/>
            <person name="Bera J."/>
            <person name="Weaver B."/>
            <person name="Jin S."/>
            <person name="Johri S."/>
            <person name="Reardon M."/>
            <person name="Webb K."/>
            <person name="Hill J."/>
            <person name="Moffat K."/>
            <person name="Tallon L."/>
            <person name="Van Aken S."/>
            <person name="Lewis M."/>
            <person name="Utterback T."/>
            <person name="Feldblyum T."/>
            <person name="Zismann V."/>
            <person name="Iobst S."/>
            <person name="Hsiao J."/>
            <person name="de Vazeille A.R."/>
            <person name="Salzberg S.L."/>
            <person name="White O."/>
            <person name="Fraser C.M."/>
            <person name="Yu Y."/>
            <person name="Kim H."/>
            <person name="Rambo T."/>
            <person name="Currie J."/>
            <person name="Collura K."/>
            <person name="Kernodle-Thompson S."/>
            <person name="Wei F."/>
            <person name="Kudrna K."/>
            <person name="Ammiraju J.S.S."/>
            <person name="Luo M."/>
            <person name="Goicoechea J.L."/>
            <person name="Wing R.A."/>
            <person name="Henry D."/>
            <person name="Oates R."/>
            <person name="Palmer M."/>
            <person name="Pries G."/>
            <person name="Saski C."/>
            <person name="Simmons J."/>
            <person name="Soderlund C."/>
            <person name="Nelson W."/>
            <person name="de la Bastide M."/>
            <person name="Spiegel L."/>
            <person name="Nascimento L."/>
            <person name="Huang E."/>
            <person name="Preston R."/>
            <person name="Zutavern T."/>
            <person name="Palmer L."/>
            <person name="O'Shaughnessy A."/>
            <person name="Dike S."/>
            <person name="McCombie W.R."/>
            <person name="Minx P."/>
            <person name="Cordum H."/>
            <person name="Wilson R."/>
            <person name="Jin W."/>
            <person name="Lee H.R."/>
            <person name="Jiang J."/>
            <person name="Jackson S."/>
        </authorList>
    </citation>
    <scope>NUCLEOTIDE SEQUENCE [LARGE SCALE GENOMIC DNA]</scope>
    <source>
        <strain>cv. Nipponbare</strain>
    </source>
</reference>
<reference key="3">
    <citation type="journal article" date="2005" name="Nature">
        <title>The map-based sequence of the rice genome.</title>
        <authorList>
            <consortium name="International rice genome sequencing project (IRGSP)"/>
        </authorList>
    </citation>
    <scope>NUCLEOTIDE SEQUENCE [LARGE SCALE GENOMIC DNA]</scope>
    <source>
        <strain>cv. Nipponbare</strain>
    </source>
</reference>
<reference key="4">
    <citation type="journal article" date="2008" name="Nucleic Acids Res.">
        <title>The rice annotation project database (RAP-DB): 2008 update.</title>
        <authorList>
            <consortium name="The rice annotation project (RAP)"/>
        </authorList>
    </citation>
    <scope>GENOME REANNOTATION</scope>
    <source>
        <strain>cv. Nipponbare</strain>
    </source>
</reference>
<reference key="5">
    <citation type="journal article" date="2013" name="Rice">
        <title>Improvement of the Oryza sativa Nipponbare reference genome using next generation sequence and optical map data.</title>
        <authorList>
            <person name="Kawahara Y."/>
            <person name="de la Bastide M."/>
            <person name="Hamilton J.P."/>
            <person name="Kanamori H."/>
            <person name="McCombie W.R."/>
            <person name="Ouyang S."/>
            <person name="Schwartz D.C."/>
            <person name="Tanaka T."/>
            <person name="Wu J."/>
            <person name="Zhou S."/>
            <person name="Childs K.L."/>
            <person name="Davidson R.M."/>
            <person name="Lin H."/>
            <person name="Quesada-Ocampo L."/>
            <person name="Vaillancourt B."/>
            <person name="Sakai H."/>
            <person name="Lee S.S."/>
            <person name="Kim J."/>
            <person name="Numa H."/>
            <person name="Itoh T."/>
            <person name="Buell C.R."/>
            <person name="Matsumoto T."/>
        </authorList>
    </citation>
    <scope>GENOME REANNOTATION</scope>
    <source>
        <strain>cv. Nipponbare</strain>
    </source>
</reference>
<reference key="6">
    <citation type="journal article" date="2005" name="PLoS Biol.">
        <title>The genomes of Oryza sativa: a history of duplications.</title>
        <authorList>
            <person name="Yu J."/>
            <person name="Wang J."/>
            <person name="Lin W."/>
            <person name="Li S."/>
            <person name="Li H."/>
            <person name="Zhou J."/>
            <person name="Ni P."/>
            <person name="Dong W."/>
            <person name="Hu S."/>
            <person name="Zeng C."/>
            <person name="Zhang J."/>
            <person name="Zhang Y."/>
            <person name="Li R."/>
            <person name="Xu Z."/>
            <person name="Li S."/>
            <person name="Li X."/>
            <person name="Zheng H."/>
            <person name="Cong L."/>
            <person name="Lin L."/>
            <person name="Yin J."/>
            <person name="Geng J."/>
            <person name="Li G."/>
            <person name="Shi J."/>
            <person name="Liu J."/>
            <person name="Lv H."/>
            <person name="Li J."/>
            <person name="Wang J."/>
            <person name="Deng Y."/>
            <person name="Ran L."/>
            <person name="Shi X."/>
            <person name="Wang X."/>
            <person name="Wu Q."/>
            <person name="Li C."/>
            <person name="Ren X."/>
            <person name="Wang J."/>
            <person name="Wang X."/>
            <person name="Li D."/>
            <person name="Liu D."/>
            <person name="Zhang X."/>
            <person name="Ji Z."/>
            <person name="Zhao W."/>
            <person name="Sun Y."/>
            <person name="Zhang Z."/>
            <person name="Bao J."/>
            <person name="Han Y."/>
            <person name="Dong L."/>
            <person name="Ji J."/>
            <person name="Chen P."/>
            <person name="Wu S."/>
            <person name="Liu J."/>
            <person name="Xiao Y."/>
            <person name="Bu D."/>
            <person name="Tan J."/>
            <person name="Yang L."/>
            <person name="Ye C."/>
            <person name="Zhang J."/>
            <person name="Xu J."/>
            <person name="Zhou Y."/>
            <person name="Yu Y."/>
            <person name="Zhang B."/>
            <person name="Zhuang S."/>
            <person name="Wei H."/>
            <person name="Liu B."/>
            <person name="Lei M."/>
            <person name="Yu H."/>
            <person name="Li Y."/>
            <person name="Xu H."/>
            <person name="Wei S."/>
            <person name="He X."/>
            <person name="Fang L."/>
            <person name="Zhang Z."/>
            <person name="Zhang Y."/>
            <person name="Huang X."/>
            <person name="Su Z."/>
            <person name="Tong W."/>
            <person name="Li J."/>
            <person name="Tong Z."/>
            <person name="Li S."/>
            <person name="Ye J."/>
            <person name="Wang L."/>
            <person name="Fang L."/>
            <person name="Lei T."/>
            <person name="Chen C.-S."/>
            <person name="Chen H.-C."/>
            <person name="Xu Z."/>
            <person name="Li H."/>
            <person name="Huang H."/>
            <person name="Zhang F."/>
            <person name="Xu H."/>
            <person name="Li N."/>
            <person name="Zhao C."/>
            <person name="Li S."/>
            <person name="Dong L."/>
            <person name="Huang Y."/>
            <person name="Li L."/>
            <person name="Xi Y."/>
            <person name="Qi Q."/>
            <person name="Li W."/>
            <person name="Zhang B."/>
            <person name="Hu W."/>
            <person name="Zhang Y."/>
            <person name="Tian X."/>
            <person name="Jiao Y."/>
            <person name="Liang X."/>
            <person name="Jin J."/>
            <person name="Gao L."/>
            <person name="Zheng W."/>
            <person name="Hao B."/>
            <person name="Liu S.-M."/>
            <person name="Wang W."/>
            <person name="Yuan L."/>
            <person name="Cao M."/>
            <person name="McDermott J."/>
            <person name="Samudrala R."/>
            <person name="Wang J."/>
            <person name="Wong G.K.-S."/>
            <person name="Yang H."/>
        </authorList>
    </citation>
    <scope>NUCLEOTIDE SEQUENCE [LARGE SCALE GENOMIC DNA]</scope>
    <source>
        <strain>cv. Nipponbare</strain>
    </source>
</reference>
<reference key="7">
    <citation type="submission" date="2006-10" db="EMBL/GenBank/DDBJ databases">
        <title>Oryza sativa full length cDNA.</title>
        <authorList>
            <consortium name="The rice full-length cDNA consortium"/>
        </authorList>
    </citation>
    <scope>NUCLEOTIDE SEQUENCE [LARGE SCALE MRNA]</scope>
    <source>
        <strain>cv. Nipponbare</strain>
    </source>
</reference>
<sequence>MQAGGGGDAGDTRGRHRIQAELKKLEQEARFLEEELEELDKTDKVSAALQELMVTAESKADPLLPVTTGPACQSWDRWFEGPQDLRRCKCWFL</sequence>